<accession>Q12296</accession>
<accession>D6W207</accession>
<evidence type="ECO:0000255" key="1"/>
<evidence type="ECO:0000255" key="2">
    <source>
        <dbReference type="PROSITE-ProRule" id="PRU00703"/>
    </source>
</evidence>
<evidence type="ECO:0000255" key="3">
    <source>
        <dbReference type="PROSITE-ProRule" id="PRU01193"/>
    </source>
</evidence>
<evidence type="ECO:0000256" key="4">
    <source>
        <dbReference type="SAM" id="MobiDB-lite"/>
    </source>
</evidence>
<evidence type="ECO:0000269" key="5">
    <source>
    </source>
</evidence>
<evidence type="ECO:0000269" key="6">
    <source>
    </source>
</evidence>
<evidence type="ECO:0000269" key="7">
    <source>
    </source>
</evidence>
<evidence type="ECO:0000305" key="8"/>
<evidence type="ECO:0007744" key="9">
    <source>
    </source>
</evidence>
<evidence type="ECO:0007744" key="10">
    <source>
    </source>
</evidence>
<evidence type="ECO:0007744" key="11">
    <source>
    </source>
</evidence>
<name>MAM3_YEAST</name>
<gene>
    <name type="primary">MAM3</name>
    <name type="ordered locus">YOL060C</name>
</gene>
<dbReference type="EMBL" id="X91067">
    <property type="protein sequence ID" value="CAA62524.1"/>
    <property type="molecule type" value="Genomic_DNA"/>
</dbReference>
<dbReference type="EMBL" id="Z74802">
    <property type="protein sequence ID" value="CAA99069.1"/>
    <property type="molecule type" value="Genomic_DNA"/>
</dbReference>
<dbReference type="EMBL" id="AY692822">
    <property type="protein sequence ID" value="AAT92841.1"/>
    <property type="molecule type" value="Genomic_DNA"/>
</dbReference>
<dbReference type="EMBL" id="BK006948">
    <property type="protein sequence ID" value="DAA10723.1"/>
    <property type="molecule type" value="Genomic_DNA"/>
</dbReference>
<dbReference type="PIR" id="S61717">
    <property type="entry name" value="S61717"/>
</dbReference>
<dbReference type="RefSeq" id="NP_014581.1">
    <property type="nucleotide sequence ID" value="NM_001183315.1"/>
</dbReference>
<dbReference type="SMR" id="Q12296"/>
<dbReference type="BioGRID" id="34341">
    <property type="interactions" value="78"/>
</dbReference>
<dbReference type="FunCoup" id="Q12296">
    <property type="interactions" value="122"/>
</dbReference>
<dbReference type="IntAct" id="Q12296">
    <property type="interactions" value="29"/>
</dbReference>
<dbReference type="STRING" id="4932.YOL060C"/>
<dbReference type="GlyGen" id="Q12296">
    <property type="glycosylation" value="1 site"/>
</dbReference>
<dbReference type="iPTMnet" id="Q12296"/>
<dbReference type="PaxDb" id="4932-YOL060C"/>
<dbReference type="PeptideAtlas" id="Q12296"/>
<dbReference type="TopDownProteomics" id="Q12296"/>
<dbReference type="EnsemblFungi" id="YOL060C_mRNA">
    <property type="protein sequence ID" value="YOL060C"/>
    <property type="gene ID" value="YOL060C"/>
</dbReference>
<dbReference type="GeneID" id="854094"/>
<dbReference type="KEGG" id="sce:YOL060C"/>
<dbReference type="AGR" id="SGD:S000005421"/>
<dbReference type="SGD" id="S000005421">
    <property type="gene designation" value="MAM3"/>
</dbReference>
<dbReference type="VEuPathDB" id="FungiDB:YOL060C"/>
<dbReference type="eggNOG" id="KOG2118">
    <property type="taxonomic scope" value="Eukaryota"/>
</dbReference>
<dbReference type="HOGENOM" id="CLU_011310_3_1_1"/>
<dbReference type="InParanoid" id="Q12296"/>
<dbReference type="OMA" id="DIHQHIM"/>
<dbReference type="OrthoDB" id="5353557at2759"/>
<dbReference type="BioCyc" id="YEAST:G3O-33469-MONOMER"/>
<dbReference type="BioGRID-ORCS" id="854094">
    <property type="hits" value="1 hit in 10 CRISPR screens"/>
</dbReference>
<dbReference type="PRO" id="PR:Q12296"/>
<dbReference type="Proteomes" id="UP000002311">
    <property type="component" value="Chromosome XV"/>
</dbReference>
<dbReference type="RNAct" id="Q12296">
    <property type="molecule type" value="protein"/>
</dbReference>
<dbReference type="GO" id="GO:0005783">
    <property type="term" value="C:endoplasmic reticulum"/>
    <property type="evidence" value="ECO:0007005"/>
    <property type="project" value="SGD"/>
</dbReference>
<dbReference type="GO" id="GO:0000329">
    <property type="term" value="C:fungal-type vacuole membrane"/>
    <property type="evidence" value="ECO:0007005"/>
    <property type="project" value="SGD"/>
</dbReference>
<dbReference type="GO" id="GO:0022857">
    <property type="term" value="F:transmembrane transporter activity"/>
    <property type="evidence" value="ECO:0000318"/>
    <property type="project" value="GO_Central"/>
</dbReference>
<dbReference type="GO" id="GO:0010961">
    <property type="term" value="P:intracellular magnesium ion homeostasis"/>
    <property type="evidence" value="ECO:0000315"/>
    <property type="project" value="SGD"/>
</dbReference>
<dbReference type="GO" id="GO:0030026">
    <property type="term" value="P:intracellular manganese ion homeostasis"/>
    <property type="evidence" value="ECO:0000315"/>
    <property type="project" value="SGD"/>
</dbReference>
<dbReference type="GO" id="GO:0007005">
    <property type="term" value="P:mitochondrion organization"/>
    <property type="evidence" value="ECO:0000315"/>
    <property type="project" value="SGD"/>
</dbReference>
<dbReference type="CDD" id="cd04590">
    <property type="entry name" value="CBS_pair_CorC_HlyC_assoc"/>
    <property type="match status" value="1"/>
</dbReference>
<dbReference type="FunFam" id="3.10.580.10:FF:000006">
    <property type="entry name" value="DUF21 and CBS domain protein"/>
    <property type="match status" value="1"/>
</dbReference>
<dbReference type="Gene3D" id="3.10.580.10">
    <property type="entry name" value="CBS-domain"/>
    <property type="match status" value="1"/>
</dbReference>
<dbReference type="InterPro" id="IPR045095">
    <property type="entry name" value="ACDP"/>
</dbReference>
<dbReference type="InterPro" id="IPR000644">
    <property type="entry name" value="CBS_dom"/>
</dbReference>
<dbReference type="InterPro" id="IPR046342">
    <property type="entry name" value="CBS_dom_sf"/>
</dbReference>
<dbReference type="InterPro" id="IPR002550">
    <property type="entry name" value="CNNM"/>
</dbReference>
<dbReference type="InterPro" id="IPR044751">
    <property type="entry name" value="Ion_transp-like_CBS"/>
</dbReference>
<dbReference type="PANTHER" id="PTHR12064">
    <property type="entry name" value="METAL TRANSPORTER CNNM"/>
    <property type="match status" value="1"/>
</dbReference>
<dbReference type="PANTHER" id="PTHR12064:SF97">
    <property type="entry name" value="METAL TRANSPORTER CNNM-5"/>
    <property type="match status" value="1"/>
</dbReference>
<dbReference type="Pfam" id="PF01595">
    <property type="entry name" value="CNNM"/>
    <property type="match status" value="1"/>
</dbReference>
<dbReference type="SUPFAM" id="SSF54631">
    <property type="entry name" value="CBS-domain pair"/>
    <property type="match status" value="1"/>
</dbReference>
<dbReference type="PROSITE" id="PS51371">
    <property type="entry name" value="CBS"/>
    <property type="match status" value="2"/>
</dbReference>
<dbReference type="PROSITE" id="PS51846">
    <property type="entry name" value="CNNM"/>
    <property type="match status" value="1"/>
</dbReference>
<proteinExistence type="evidence at protein level"/>
<keyword id="KW-0472">Membrane</keyword>
<keyword id="KW-0597">Phosphoprotein</keyword>
<keyword id="KW-1185">Reference proteome</keyword>
<keyword id="KW-0677">Repeat</keyword>
<keyword id="KW-0812">Transmembrane</keyword>
<keyword id="KW-1133">Transmembrane helix</keyword>
<keyword id="KW-0926">Vacuole</keyword>
<comment type="function">
    <text evidence="7">Involved in metal homeostasis and more specially in manganese sensitivity.</text>
</comment>
<comment type="subcellular location">
    <subcellularLocation>
        <location evidence="5 7">Vacuole membrane</location>
        <topology evidence="5 7">Multi-pass membrane protein</topology>
    </subcellularLocation>
</comment>
<comment type="miscellaneous">
    <text evidence="6">Present with 2270 molecules/cell in log phase SD medium.</text>
</comment>
<comment type="similarity">
    <text evidence="8">Belongs to the ACDP family.</text>
</comment>
<protein>
    <recommendedName>
        <fullName>Protein MAM3</fullName>
    </recommendedName>
</protein>
<reference key="1">
    <citation type="journal article" date="1996" name="Yeast">
        <title>Analysis of a 26 kb region on the left arm of yeast chromosome XV.</title>
        <authorList>
            <person name="Mannhaupt G."/>
            <person name="Vetter I."/>
            <person name="Schwarzlose C."/>
            <person name="Mitzel S."/>
            <person name="Feldmann H."/>
        </authorList>
    </citation>
    <scope>NUCLEOTIDE SEQUENCE [GENOMIC DNA]</scope>
    <source>
        <strain>ATCC 96604 / S288c / FY1679</strain>
    </source>
</reference>
<reference key="2">
    <citation type="journal article" date="1997" name="Nature">
        <title>The nucleotide sequence of Saccharomyces cerevisiae chromosome XV.</title>
        <authorList>
            <person name="Dujon B."/>
            <person name="Albermann K."/>
            <person name="Aldea M."/>
            <person name="Alexandraki D."/>
            <person name="Ansorge W."/>
            <person name="Arino J."/>
            <person name="Benes V."/>
            <person name="Bohn C."/>
            <person name="Bolotin-Fukuhara M."/>
            <person name="Bordonne R."/>
            <person name="Boyer J."/>
            <person name="Camasses A."/>
            <person name="Casamayor A."/>
            <person name="Casas C."/>
            <person name="Cheret G."/>
            <person name="Cziepluch C."/>
            <person name="Daignan-Fornier B."/>
            <person name="Dang V.-D."/>
            <person name="de Haan M."/>
            <person name="Delius H."/>
            <person name="Durand P."/>
            <person name="Fairhead C."/>
            <person name="Feldmann H."/>
            <person name="Gaillon L."/>
            <person name="Galisson F."/>
            <person name="Gamo F.-J."/>
            <person name="Gancedo C."/>
            <person name="Goffeau A."/>
            <person name="Goulding S.E."/>
            <person name="Grivell L.A."/>
            <person name="Habbig B."/>
            <person name="Hand N.J."/>
            <person name="Hani J."/>
            <person name="Hattenhorst U."/>
            <person name="Hebling U."/>
            <person name="Hernando Y."/>
            <person name="Herrero E."/>
            <person name="Heumann K."/>
            <person name="Hiesel R."/>
            <person name="Hilger F."/>
            <person name="Hofmann B."/>
            <person name="Hollenberg C.P."/>
            <person name="Hughes B."/>
            <person name="Jauniaux J.-C."/>
            <person name="Kalogeropoulos A."/>
            <person name="Katsoulou C."/>
            <person name="Kordes E."/>
            <person name="Lafuente M.J."/>
            <person name="Landt O."/>
            <person name="Louis E.J."/>
            <person name="Maarse A.C."/>
            <person name="Madania A."/>
            <person name="Mannhaupt G."/>
            <person name="Marck C."/>
            <person name="Martin R.P."/>
            <person name="Mewes H.-W."/>
            <person name="Michaux G."/>
            <person name="Paces V."/>
            <person name="Parle-McDermott A.G."/>
            <person name="Pearson B.M."/>
            <person name="Perrin A."/>
            <person name="Pettersson B."/>
            <person name="Poch O."/>
            <person name="Pohl T.M."/>
            <person name="Poirey R."/>
            <person name="Portetelle D."/>
            <person name="Pujol A."/>
            <person name="Purnelle B."/>
            <person name="Ramezani Rad M."/>
            <person name="Rechmann S."/>
            <person name="Schwager C."/>
            <person name="Schweizer M."/>
            <person name="Sor F."/>
            <person name="Sterky F."/>
            <person name="Tarassov I.A."/>
            <person name="Teodoru C."/>
            <person name="Tettelin H."/>
            <person name="Thierry A."/>
            <person name="Tobiasch E."/>
            <person name="Tzermia M."/>
            <person name="Uhlen M."/>
            <person name="Unseld M."/>
            <person name="Valens M."/>
            <person name="Vandenbol M."/>
            <person name="Vetter I."/>
            <person name="Vlcek C."/>
            <person name="Voet M."/>
            <person name="Volckaert G."/>
            <person name="Voss H."/>
            <person name="Wambutt R."/>
            <person name="Wedler H."/>
            <person name="Wiemann S."/>
            <person name="Winsor B."/>
            <person name="Wolfe K.H."/>
            <person name="Zollner A."/>
            <person name="Zumstein E."/>
            <person name="Kleine K."/>
        </authorList>
    </citation>
    <scope>NUCLEOTIDE SEQUENCE [LARGE SCALE GENOMIC DNA]</scope>
    <source>
        <strain>ATCC 204508 / S288c</strain>
    </source>
</reference>
<reference key="3">
    <citation type="journal article" date="2014" name="G3 (Bethesda)">
        <title>The reference genome sequence of Saccharomyces cerevisiae: Then and now.</title>
        <authorList>
            <person name="Engel S.R."/>
            <person name="Dietrich F.S."/>
            <person name="Fisk D.G."/>
            <person name="Binkley G."/>
            <person name="Balakrishnan R."/>
            <person name="Costanzo M.C."/>
            <person name="Dwight S.S."/>
            <person name="Hitz B.C."/>
            <person name="Karra K."/>
            <person name="Nash R.S."/>
            <person name="Weng S."/>
            <person name="Wong E.D."/>
            <person name="Lloyd P."/>
            <person name="Skrzypek M.S."/>
            <person name="Miyasato S.R."/>
            <person name="Simison M."/>
            <person name="Cherry J.M."/>
        </authorList>
    </citation>
    <scope>GENOME REANNOTATION</scope>
    <source>
        <strain>ATCC 204508 / S288c</strain>
    </source>
</reference>
<reference key="4">
    <citation type="journal article" date="2007" name="Genome Res.">
        <title>Approaching a complete repository of sequence-verified protein-encoding clones for Saccharomyces cerevisiae.</title>
        <authorList>
            <person name="Hu Y."/>
            <person name="Rolfs A."/>
            <person name="Bhullar B."/>
            <person name="Murthy T.V.S."/>
            <person name="Zhu C."/>
            <person name="Berger M.F."/>
            <person name="Camargo A.A."/>
            <person name="Kelley F."/>
            <person name="McCarron S."/>
            <person name="Jepson D."/>
            <person name="Richardson A."/>
            <person name="Raphael J."/>
            <person name="Moreira D."/>
            <person name="Taycher E."/>
            <person name="Zuo D."/>
            <person name="Mohr S."/>
            <person name="Kane M.F."/>
            <person name="Williamson J."/>
            <person name="Simpson A.J.G."/>
            <person name="Bulyk M.L."/>
            <person name="Harlow E."/>
            <person name="Marsischky G."/>
            <person name="Kolodner R.D."/>
            <person name="LaBaer J."/>
        </authorList>
    </citation>
    <scope>NUCLEOTIDE SEQUENCE [GENOMIC DNA]</scope>
    <source>
        <strain>ATCC 204508 / S288c</strain>
    </source>
</reference>
<reference key="5">
    <citation type="journal article" date="2003" name="Nature">
        <title>Global analysis of protein localization in budding yeast.</title>
        <authorList>
            <person name="Huh W.-K."/>
            <person name="Falvo J.V."/>
            <person name="Gerke L.C."/>
            <person name="Carroll A.S."/>
            <person name="Howson R.W."/>
            <person name="Weissman J.S."/>
            <person name="O'Shea E.K."/>
        </authorList>
    </citation>
    <scope>SUBCELLULAR LOCATION [LARGE SCALE ANALYSIS]</scope>
</reference>
<reference key="6">
    <citation type="journal article" date="2003" name="Nature">
        <title>Global analysis of protein expression in yeast.</title>
        <authorList>
            <person name="Ghaemmaghami S."/>
            <person name="Huh W.-K."/>
            <person name="Bower K."/>
            <person name="Howson R.W."/>
            <person name="Belle A."/>
            <person name="Dephoure N."/>
            <person name="O'Shea E.K."/>
            <person name="Weissman J.S."/>
        </authorList>
    </citation>
    <scope>LEVEL OF PROTEIN EXPRESSION [LARGE SCALE ANALYSIS]</scope>
</reference>
<reference key="7">
    <citation type="journal article" date="2005" name="Biochem. J.">
        <title>Manganese toxicity and Saccharomyces cerevisiae Mam3p, a member of the ACDP (ancient conserved domain protein) family.</title>
        <authorList>
            <person name="Yang M."/>
            <person name="Jensen L.T."/>
            <person name="Gardner A.J."/>
            <person name="Culotta V.C."/>
        </authorList>
    </citation>
    <scope>FUNCTION</scope>
    <scope>SUBCELLULAR LOCATION</scope>
</reference>
<reference key="8">
    <citation type="journal article" date="2006" name="Proc. Natl. Acad. Sci. U.S.A.">
        <title>A global topology map of the Saccharomyces cerevisiae membrane proteome.</title>
        <authorList>
            <person name="Kim H."/>
            <person name="Melen K."/>
            <person name="Oesterberg M."/>
            <person name="von Heijne G."/>
        </authorList>
    </citation>
    <scope>TOPOLOGY [LARGE SCALE ANALYSIS]</scope>
    <source>
        <strain>ATCC 208353 / W303-1A</strain>
    </source>
</reference>
<reference key="9">
    <citation type="journal article" date="2007" name="Proc. Natl. Acad. Sci. U.S.A.">
        <title>Analysis of phosphorylation sites on proteins from Saccharomyces cerevisiae by electron transfer dissociation (ETD) mass spectrometry.</title>
        <authorList>
            <person name="Chi A."/>
            <person name="Huttenhower C."/>
            <person name="Geer L.Y."/>
            <person name="Coon J.J."/>
            <person name="Syka J.E.P."/>
            <person name="Bai D.L."/>
            <person name="Shabanowitz J."/>
            <person name="Burke D.J."/>
            <person name="Troyanskaya O.G."/>
            <person name="Hunt D.F."/>
        </authorList>
    </citation>
    <scope>PHOSPHORYLATION [LARGE SCALE ANALYSIS] AT SER-527</scope>
    <scope>IDENTIFICATION BY MASS SPECTROMETRY [LARGE SCALE ANALYSIS]</scope>
</reference>
<reference key="10">
    <citation type="journal article" date="2008" name="Mol. Cell. Proteomics">
        <title>A multidimensional chromatography technology for in-depth phosphoproteome analysis.</title>
        <authorList>
            <person name="Albuquerque C.P."/>
            <person name="Smolka M.B."/>
            <person name="Payne S.H."/>
            <person name="Bafna V."/>
            <person name="Eng J."/>
            <person name="Zhou H."/>
        </authorList>
    </citation>
    <scope>PHOSPHORYLATION [LARGE SCALE ANALYSIS] AT SER-614</scope>
    <scope>IDENTIFICATION BY MASS SPECTROMETRY [LARGE SCALE ANALYSIS]</scope>
</reference>
<reference key="11">
    <citation type="journal article" date="2009" name="Science">
        <title>Global analysis of Cdk1 substrate phosphorylation sites provides insights into evolution.</title>
        <authorList>
            <person name="Holt L.J."/>
            <person name="Tuch B.B."/>
            <person name="Villen J."/>
            <person name="Johnson A.D."/>
            <person name="Gygi S.P."/>
            <person name="Morgan D.O."/>
        </authorList>
    </citation>
    <scope>PHOSPHORYLATION [LARGE SCALE ANALYSIS] AT SER-439; SER-447; SER-603; TYR-604 AND THR-607</scope>
    <scope>IDENTIFICATION BY MASS SPECTROMETRY [LARGE SCALE ANALYSIS]</scope>
</reference>
<feature type="chain" id="PRO_0000255960" description="Protein MAM3">
    <location>
        <begin position="1"/>
        <end position="706"/>
    </location>
</feature>
<feature type="topological domain" description="Vacuolar" evidence="1">
    <location>
        <begin position="1"/>
        <end position="16"/>
    </location>
</feature>
<feature type="transmembrane region" description="Helical" evidence="1">
    <location>
        <begin position="17"/>
        <end position="37"/>
    </location>
</feature>
<feature type="topological domain" description="Cytoplasmic" evidence="1">
    <location>
        <begin position="38"/>
        <end position="65"/>
    </location>
</feature>
<feature type="transmembrane region" description="Helical" evidence="1">
    <location>
        <begin position="66"/>
        <end position="86"/>
    </location>
</feature>
<feature type="topological domain" description="Vacuolar" evidence="1">
    <location>
        <begin position="87"/>
        <end position="120"/>
    </location>
</feature>
<feature type="transmembrane region" description="Helical" evidence="1">
    <location>
        <begin position="121"/>
        <end position="141"/>
    </location>
</feature>
<feature type="topological domain" description="Cytoplasmic" evidence="1">
    <location>
        <begin position="142"/>
        <end position="145"/>
    </location>
</feature>
<feature type="transmembrane region" description="Helical" evidence="1">
    <location>
        <begin position="146"/>
        <end position="166"/>
    </location>
</feature>
<feature type="topological domain" description="Vacuolar" evidence="1">
    <location>
        <begin position="167"/>
        <end position="177"/>
    </location>
</feature>
<feature type="transmembrane region" description="Helical" evidence="1">
    <location>
        <begin position="178"/>
        <end position="198"/>
    </location>
</feature>
<feature type="topological domain" description="Cytoplasmic" evidence="1">
    <location>
        <begin position="199"/>
        <end position="706"/>
    </location>
</feature>
<feature type="domain" description="CNNM transmembrane" evidence="3">
    <location>
        <begin position="57"/>
        <end position="240"/>
    </location>
</feature>
<feature type="domain" description="CBS 1" evidence="2">
    <location>
        <begin position="259"/>
        <end position="320"/>
    </location>
</feature>
<feature type="domain" description="CBS 2" evidence="2">
    <location>
        <begin position="321"/>
        <end position="386"/>
    </location>
</feature>
<feature type="region of interest" description="Disordered" evidence="4">
    <location>
        <begin position="421"/>
        <end position="495"/>
    </location>
</feature>
<feature type="region of interest" description="Disordered" evidence="4">
    <location>
        <begin position="515"/>
        <end position="540"/>
    </location>
</feature>
<feature type="region of interest" description="Disordered" evidence="4">
    <location>
        <begin position="557"/>
        <end position="597"/>
    </location>
</feature>
<feature type="region of interest" description="Disordered" evidence="4">
    <location>
        <begin position="626"/>
        <end position="706"/>
    </location>
</feature>
<feature type="compositionally biased region" description="Low complexity" evidence="4">
    <location>
        <begin position="433"/>
        <end position="445"/>
    </location>
</feature>
<feature type="compositionally biased region" description="Polar residues" evidence="4">
    <location>
        <begin position="472"/>
        <end position="495"/>
    </location>
</feature>
<feature type="compositionally biased region" description="Low complexity" evidence="4">
    <location>
        <begin position="566"/>
        <end position="575"/>
    </location>
</feature>
<feature type="compositionally biased region" description="Polar residues" evidence="4">
    <location>
        <begin position="576"/>
        <end position="597"/>
    </location>
</feature>
<feature type="compositionally biased region" description="Basic and acidic residues" evidence="4">
    <location>
        <begin position="630"/>
        <end position="639"/>
    </location>
</feature>
<feature type="compositionally biased region" description="Low complexity" evidence="4">
    <location>
        <begin position="658"/>
        <end position="680"/>
    </location>
</feature>
<feature type="compositionally biased region" description="Polar residues" evidence="4">
    <location>
        <begin position="681"/>
        <end position="706"/>
    </location>
</feature>
<feature type="modified residue" description="Phosphoserine" evidence="11">
    <location>
        <position position="439"/>
    </location>
</feature>
<feature type="modified residue" description="Phosphoserine" evidence="11">
    <location>
        <position position="447"/>
    </location>
</feature>
<feature type="modified residue" description="Phosphoserine" evidence="9">
    <location>
        <position position="527"/>
    </location>
</feature>
<feature type="modified residue" description="Phosphoserine" evidence="11">
    <location>
        <position position="603"/>
    </location>
</feature>
<feature type="modified residue" description="Phosphotyrosine" evidence="11">
    <location>
        <position position="604"/>
    </location>
</feature>
<feature type="modified residue" description="Phosphothreonine" evidence="11">
    <location>
        <position position="607"/>
    </location>
</feature>
<feature type="modified residue" description="Phosphoserine" evidence="10">
    <location>
        <position position="614"/>
    </location>
</feature>
<organism>
    <name type="scientific">Saccharomyces cerevisiae (strain ATCC 204508 / S288c)</name>
    <name type="common">Baker's yeast</name>
    <dbReference type="NCBI Taxonomy" id="559292"/>
    <lineage>
        <taxon>Eukaryota</taxon>
        <taxon>Fungi</taxon>
        <taxon>Dikarya</taxon>
        <taxon>Ascomycota</taxon>
        <taxon>Saccharomycotina</taxon>
        <taxon>Saccharomycetes</taxon>
        <taxon>Saccharomycetales</taxon>
        <taxon>Saccharomycetaceae</taxon>
        <taxon>Saccharomyces</taxon>
    </lineage>
</organism>
<sequence>MSFLPLRSRSRSGAPHWVYIILYHIFTIPKIYSLPLLSGSHVLNSRDVADSGHSVGDEASVTTYYIISIILVLLGGVFAGLTLGLMGQDEVYLKVISTSGSNSEKKLAKRVLDLISRGKHWVLVTLLLSNVITNETLPIVLDRCLGGGWQAVVSSTILIVIFGEIIPQSVCVKYGLQVGAFFCPFVLVLMYLMYPVAYPIATLLDYMLGEDHGTMYKKSGLKTLVTLHRTMGVERLTKDEVTIISAVLDLKAKRVEEIMTPIENVFTMSADTILDDKTVEKIFNSGFSRIPIFLPNEPNNFIGMLLVRVLISYDPDDCLPISHFPLATLPETSPNTSCLNILNYFQEGKAHMCVVSKEPGSSHGAIGVLTLEDVIEELIGEEIVDESDVFVDMHQHIMRQQPGPLSKRHITSYLHHLYTSSHKEHKAADQADESSPLLSPSNSNHPSEHPQQDLNNKSWKQKSNDGYDRSNAVLSPTPQVTEHGTIIPSNLASNPLNVNKSFVTIKKPANVPKIITTHTPHSSKEPSPAPHSNDKSLSAEEQQLLSDHAELSRQAVLHTQRSGQPTQVTTSTKTTRNSPDSISIPNSGANHGNENQNVTISTSYQNTKNGIVESVITVKGVPKTIIGPAKDWDESKSEYGNENINQENSNRSDDRESSSSNASLFSSIKNKFKNENANNNDRSNFTDSLSRTSNYDANGSSSTIKR</sequence>